<sequence length="66" mass="7554">MPKMKTHRGSAKRFKKTGSGKLKRSHAYTSHLFANKSQKQKRKLRKSAVVSAGDFKRIKQQLANIK</sequence>
<accession>Q65GB4</accession>
<accession>Q62RR9</accession>
<organism>
    <name type="scientific">Bacillus licheniformis (strain ATCC 14580 / DSM 13 / JCM 2505 / CCUG 7422 / NBRC 12200 / NCIMB 9375 / NCTC 10341 / NRRL NRS-1264 / Gibson 46)</name>
    <dbReference type="NCBI Taxonomy" id="279010"/>
    <lineage>
        <taxon>Bacteria</taxon>
        <taxon>Bacillati</taxon>
        <taxon>Bacillota</taxon>
        <taxon>Bacilli</taxon>
        <taxon>Bacillales</taxon>
        <taxon>Bacillaceae</taxon>
        <taxon>Bacillus</taxon>
    </lineage>
</organism>
<comment type="similarity">
    <text evidence="1">Belongs to the bacterial ribosomal protein bL35 family.</text>
</comment>
<keyword id="KW-1185">Reference proteome</keyword>
<keyword id="KW-0687">Ribonucleoprotein</keyword>
<keyword id="KW-0689">Ribosomal protein</keyword>
<reference key="1">
    <citation type="journal article" date="2004" name="J. Mol. Microbiol. Biotechnol.">
        <title>The complete genome sequence of Bacillus licheniformis DSM13, an organism with great industrial potential.</title>
        <authorList>
            <person name="Veith B."/>
            <person name="Herzberg C."/>
            <person name="Steckel S."/>
            <person name="Feesche J."/>
            <person name="Maurer K.H."/>
            <person name="Ehrenreich P."/>
            <person name="Baeumer S."/>
            <person name="Henne A."/>
            <person name="Liesegang H."/>
            <person name="Merkl R."/>
            <person name="Ehrenreich A."/>
            <person name="Gottschalk G."/>
        </authorList>
    </citation>
    <scope>NUCLEOTIDE SEQUENCE [LARGE SCALE GENOMIC DNA]</scope>
    <source>
        <strain>ATCC 14580 / DSM 13 / JCM 2505 / CCUG 7422 / NBRC 12200 / NCIMB 9375 / NCTC 10341 / NRRL NRS-1264 / Gibson 46</strain>
    </source>
</reference>
<reference key="2">
    <citation type="journal article" date="2004" name="Genome Biol.">
        <title>Complete genome sequence of the industrial bacterium Bacillus licheniformis and comparisons with closely related Bacillus species.</title>
        <authorList>
            <person name="Rey M.W."/>
            <person name="Ramaiya P."/>
            <person name="Nelson B.A."/>
            <person name="Brody-Karpin S.D."/>
            <person name="Zaretsky E.J."/>
            <person name="Tang M."/>
            <person name="Lopez de Leon A."/>
            <person name="Xiang H."/>
            <person name="Gusti V."/>
            <person name="Clausen I.G."/>
            <person name="Olsen P.B."/>
            <person name="Rasmussen M.D."/>
            <person name="Andersen J.T."/>
            <person name="Joergensen P.L."/>
            <person name="Larsen T.S."/>
            <person name="Sorokin A."/>
            <person name="Bolotin A."/>
            <person name="Lapidus A."/>
            <person name="Galleron N."/>
            <person name="Ehrlich S.D."/>
            <person name="Berka R.M."/>
        </authorList>
    </citation>
    <scope>NUCLEOTIDE SEQUENCE [LARGE SCALE GENOMIC DNA]</scope>
    <source>
        <strain>ATCC 14580 / DSM 13 / JCM 2505 / CCUG 7422 / NBRC 12200 / NCIMB 9375 / NCTC 10341 / NRRL NRS-1264 / Gibson 46</strain>
    </source>
</reference>
<feature type="chain" id="PRO_0000258637" description="Large ribosomal subunit protein bL35">
    <location>
        <begin position="1"/>
        <end position="66"/>
    </location>
</feature>
<feature type="region of interest" description="Disordered" evidence="2">
    <location>
        <begin position="1"/>
        <end position="48"/>
    </location>
</feature>
<feature type="compositionally biased region" description="Basic residues" evidence="2">
    <location>
        <begin position="1"/>
        <end position="26"/>
    </location>
</feature>
<name>RL35_BACLD</name>
<dbReference type="EMBL" id="AE017333">
    <property type="protein sequence ID" value="AAU41900.1"/>
    <property type="molecule type" value="Genomic_DNA"/>
</dbReference>
<dbReference type="EMBL" id="CP000002">
    <property type="protein sequence ID" value="AAU24541.1"/>
    <property type="molecule type" value="Genomic_DNA"/>
</dbReference>
<dbReference type="RefSeq" id="WP_003184267.1">
    <property type="nucleotide sequence ID" value="NC_006322.1"/>
</dbReference>
<dbReference type="SMR" id="Q65GB4"/>
<dbReference type="STRING" id="279010.BL05300"/>
<dbReference type="GeneID" id="92860372"/>
<dbReference type="KEGG" id="bld:BLi03034"/>
<dbReference type="KEGG" id="bli:BL05300"/>
<dbReference type="eggNOG" id="COG0291">
    <property type="taxonomic scope" value="Bacteria"/>
</dbReference>
<dbReference type="HOGENOM" id="CLU_169643_3_0_9"/>
<dbReference type="Proteomes" id="UP000000606">
    <property type="component" value="Chromosome"/>
</dbReference>
<dbReference type="GO" id="GO:0022625">
    <property type="term" value="C:cytosolic large ribosomal subunit"/>
    <property type="evidence" value="ECO:0007669"/>
    <property type="project" value="TreeGrafter"/>
</dbReference>
<dbReference type="GO" id="GO:0003735">
    <property type="term" value="F:structural constituent of ribosome"/>
    <property type="evidence" value="ECO:0007669"/>
    <property type="project" value="InterPro"/>
</dbReference>
<dbReference type="GO" id="GO:0006412">
    <property type="term" value="P:translation"/>
    <property type="evidence" value="ECO:0007669"/>
    <property type="project" value="UniProtKB-UniRule"/>
</dbReference>
<dbReference type="FunFam" id="4.10.410.60:FF:000001">
    <property type="entry name" value="50S ribosomal protein L35"/>
    <property type="match status" value="1"/>
</dbReference>
<dbReference type="Gene3D" id="4.10.410.60">
    <property type="match status" value="1"/>
</dbReference>
<dbReference type="HAMAP" id="MF_00514">
    <property type="entry name" value="Ribosomal_bL35"/>
    <property type="match status" value="1"/>
</dbReference>
<dbReference type="InterPro" id="IPR001706">
    <property type="entry name" value="Ribosomal_bL35"/>
</dbReference>
<dbReference type="InterPro" id="IPR021137">
    <property type="entry name" value="Ribosomal_bL35-like"/>
</dbReference>
<dbReference type="InterPro" id="IPR018265">
    <property type="entry name" value="Ribosomal_bL35_CS"/>
</dbReference>
<dbReference type="InterPro" id="IPR037229">
    <property type="entry name" value="Ribosomal_bL35_sf"/>
</dbReference>
<dbReference type="NCBIfam" id="TIGR00001">
    <property type="entry name" value="rpmI_bact"/>
    <property type="match status" value="1"/>
</dbReference>
<dbReference type="PANTHER" id="PTHR33343">
    <property type="entry name" value="54S RIBOSOMAL PROTEIN BL35M"/>
    <property type="match status" value="1"/>
</dbReference>
<dbReference type="PANTHER" id="PTHR33343:SF1">
    <property type="entry name" value="LARGE RIBOSOMAL SUBUNIT PROTEIN BL35M"/>
    <property type="match status" value="1"/>
</dbReference>
<dbReference type="Pfam" id="PF01632">
    <property type="entry name" value="Ribosomal_L35p"/>
    <property type="match status" value="1"/>
</dbReference>
<dbReference type="PRINTS" id="PR00064">
    <property type="entry name" value="RIBOSOMALL35"/>
</dbReference>
<dbReference type="SUPFAM" id="SSF143034">
    <property type="entry name" value="L35p-like"/>
    <property type="match status" value="1"/>
</dbReference>
<dbReference type="PROSITE" id="PS00936">
    <property type="entry name" value="RIBOSOMAL_L35"/>
    <property type="match status" value="1"/>
</dbReference>
<proteinExistence type="inferred from homology"/>
<evidence type="ECO:0000255" key="1">
    <source>
        <dbReference type="HAMAP-Rule" id="MF_00514"/>
    </source>
</evidence>
<evidence type="ECO:0000256" key="2">
    <source>
        <dbReference type="SAM" id="MobiDB-lite"/>
    </source>
</evidence>
<evidence type="ECO:0000305" key="3"/>
<gene>
    <name evidence="1" type="primary">rpmI</name>
    <name type="ordered locus">BLi03034</name>
    <name type="ordered locus">BL05300</name>
</gene>
<protein>
    <recommendedName>
        <fullName evidence="1">Large ribosomal subunit protein bL35</fullName>
    </recommendedName>
    <alternativeName>
        <fullName evidence="3">50S ribosomal protein L35</fullName>
    </alternativeName>
</protein>